<name>RLMH1_THEPX</name>
<reference key="1">
    <citation type="submission" date="2008-01" db="EMBL/GenBank/DDBJ databases">
        <title>Complete sequence of Thermoanaerobacter sp. X514.</title>
        <authorList>
            <consortium name="US DOE Joint Genome Institute"/>
            <person name="Copeland A."/>
            <person name="Lucas S."/>
            <person name="Lapidus A."/>
            <person name="Barry K."/>
            <person name="Glavina del Rio T."/>
            <person name="Dalin E."/>
            <person name="Tice H."/>
            <person name="Pitluck S."/>
            <person name="Bruce D."/>
            <person name="Goodwin L."/>
            <person name="Saunders E."/>
            <person name="Brettin T."/>
            <person name="Detter J.C."/>
            <person name="Han C."/>
            <person name="Schmutz J."/>
            <person name="Larimer F."/>
            <person name="Land M."/>
            <person name="Hauser L."/>
            <person name="Kyrpides N."/>
            <person name="Kim E."/>
            <person name="Hemme C."/>
            <person name="Fields M.W."/>
            <person name="He Z."/>
            <person name="Zhou J."/>
            <person name="Richardson P."/>
        </authorList>
    </citation>
    <scope>NUCLEOTIDE SEQUENCE [LARGE SCALE GENOMIC DNA]</scope>
    <source>
        <strain>X514</strain>
    </source>
</reference>
<evidence type="ECO:0000255" key="1">
    <source>
        <dbReference type="HAMAP-Rule" id="MF_00658"/>
    </source>
</evidence>
<accession>B0K568</accession>
<sequence length="133" mass="15421">MNYKVYATGNKIEKFYSDAIKEYQKRLNRFCNISFTNYKNPQQLPKQQIDKYYKIGILPSGKSLSSEELAEKIKELELSAKTDILIVIGNEEIPLNESISISPMEMSLGLASTILFEQLYRAYKILNNEPYHK</sequence>
<proteinExistence type="inferred from homology"/>
<protein>
    <recommendedName>
        <fullName evidence="1">Ribosomal RNA large subunit methyltransferase H 1</fullName>
        <ecNumber evidence="1">2.1.1.177</ecNumber>
    </recommendedName>
    <alternativeName>
        <fullName evidence="1">23S rRNA (pseudouridine1915-N3)-methyltransferase 1</fullName>
    </alternativeName>
    <alternativeName>
        <fullName evidence="1">23S rRNA m3Psi1915 methyltransferase 1</fullName>
    </alternativeName>
    <alternativeName>
        <fullName evidence="1">rRNA (pseudouridine-N3-)-methyltransferase RlmH 1</fullName>
    </alternativeName>
</protein>
<gene>
    <name evidence="1" type="primary">rlmH1</name>
    <name type="ordered locus">Teth514_2339</name>
</gene>
<organism>
    <name type="scientific">Thermoanaerobacter sp. (strain X514)</name>
    <dbReference type="NCBI Taxonomy" id="399726"/>
    <lineage>
        <taxon>Bacteria</taxon>
        <taxon>Bacillati</taxon>
        <taxon>Bacillota</taxon>
        <taxon>Clostridia</taxon>
        <taxon>Thermoanaerobacterales</taxon>
        <taxon>Thermoanaerobacteraceae</taxon>
        <taxon>Thermoanaerobacter</taxon>
    </lineage>
</organism>
<comment type="function">
    <text evidence="1">Specifically methylates the pseudouridine at position 1915 (m3Psi1915) in 23S rRNA.</text>
</comment>
<comment type="catalytic activity">
    <reaction evidence="1">
        <text>pseudouridine(1915) in 23S rRNA + S-adenosyl-L-methionine = N(3)-methylpseudouridine(1915) in 23S rRNA + S-adenosyl-L-homocysteine + H(+)</text>
        <dbReference type="Rhea" id="RHEA:42752"/>
        <dbReference type="Rhea" id="RHEA-COMP:10221"/>
        <dbReference type="Rhea" id="RHEA-COMP:10222"/>
        <dbReference type="ChEBI" id="CHEBI:15378"/>
        <dbReference type="ChEBI" id="CHEBI:57856"/>
        <dbReference type="ChEBI" id="CHEBI:59789"/>
        <dbReference type="ChEBI" id="CHEBI:65314"/>
        <dbReference type="ChEBI" id="CHEBI:74486"/>
        <dbReference type="EC" id="2.1.1.177"/>
    </reaction>
</comment>
<comment type="subunit">
    <text evidence="1">Homodimer.</text>
</comment>
<comment type="subcellular location">
    <subcellularLocation>
        <location evidence="1">Cytoplasm</location>
    </subcellularLocation>
</comment>
<comment type="similarity">
    <text evidence="1">Belongs to the RNA methyltransferase RlmH family.</text>
</comment>
<keyword id="KW-0963">Cytoplasm</keyword>
<keyword id="KW-0489">Methyltransferase</keyword>
<keyword id="KW-0698">rRNA processing</keyword>
<keyword id="KW-0949">S-adenosyl-L-methionine</keyword>
<keyword id="KW-0808">Transferase</keyword>
<dbReference type="EC" id="2.1.1.177" evidence="1"/>
<dbReference type="EMBL" id="CP000923">
    <property type="protein sequence ID" value="ABY93599.1"/>
    <property type="molecule type" value="Genomic_DNA"/>
</dbReference>
<dbReference type="RefSeq" id="WP_009052100.1">
    <property type="nucleotide sequence ID" value="NC_010320.1"/>
</dbReference>
<dbReference type="SMR" id="B0K568"/>
<dbReference type="KEGG" id="tex:Teth514_2339"/>
<dbReference type="HOGENOM" id="CLU_100552_0_1_9"/>
<dbReference type="Proteomes" id="UP000002155">
    <property type="component" value="Chromosome"/>
</dbReference>
<dbReference type="GO" id="GO:0005737">
    <property type="term" value="C:cytoplasm"/>
    <property type="evidence" value="ECO:0007669"/>
    <property type="project" value="UniProtKB-SubCell"/>
</dbReference>
<dbReference type="GO" id="GO:0070038">
    <property type="term" value="F:rRNA (pseudouridine-N3-)-methyltransferase activity"/>
    <property type="evidence" value="ECO:0007669"/>
    <property type="project" value="UniProtKB-UniRule"/>
</dbReference>
<dbReference type="CDD" id="cd18081">
    <property type="entry name" value="RlmH-like"/>
    <property type="match status" value="1"/>
</dbReference>
<dbReference type="Gene3D" id="3.40.1280.10">
    <property type="match status" value="1"/>
</dbReference>
<dbReference type="HAMAP" id="MF_00658">
    <property type="entry name" value="23SrRNA_methyltr_H"/>
    <property type="match status" value="1"/>
</dbReference>
<dbReference type="InterPro" id="IPR029028">
    <property type="entry name" value="Alpha/beta_knot_MTases"/>
</dbReference>
<dbReference type="InterPro" id="IPR003742">
    <property type="entry name" value="RlmH-like"/>
</dbReference>
<dbReference type="InterPro" id="IPR029026">
    <property type="entry name" value="tRNA_m1G_MTases_N"/>
</dbReference>
<dbReference type="PANTHER" id="PTHR33603">
    <property type="entry name" value="METHYLTRANSFERASE"/>
    <property type="match status" value="1"/>
</dbReference>
<dbReference type="PANTHER" id="PTHR33603:SF1">
    <property type="entry name" value="RIBOSOMAL RNA LARGE SUBUNIT METHYLTRANSFERASE H"/>
    <property type="match status" value="1"/>
</dbReference>
<dbReference type="Pfam" id="PF02590">
    <property type="entry name" value="SPOUT_MTase"/>
    <property type="match status" value="1"/>
</dbReference>
<dbReference type="SUPFAM" id="SSF75217">
    <property type="entry name" value="alpha/beta knot"/>
    <property type="match status" value="1"/>
</dbReference>
<feature type="chain" id="PRO_0000366669" description="Ribosomal RNA large subunit methyltransferase H 1">
    <location>
        <begin position="1"/>
        <end position="133"/>
    </location>
</feature>
<feature type="binding site" evidence="1">
    <location>
        <position position="55"/>
    </location>
    <ligand>
        <name>S-adenosyl-L-methionine</name>
        <dbReference type="ChEBI" id="CHEBI:59789"/>
    </ligand>
</feature>
<feature type="binding site" evidence="1">
    <location>
        <position position="89"/>
    </location>
    <ligand>
        <name>S-adenosyl-L-methionine</name>
        <dbReference type="ChEBI" id="CHEBI:59789"/>
    </ligand>
</feature>
<feature type="binding site" evidence="1">
    <location>
        <begin position="101"/>
        <end position="106"/>
    </location>
    <ligand>
        <name>S-adenosyl-L-methionine</name>
        <dbReference type="ChEBI" id="CHEBI:59789"/>
    </ligand>
</feature>